<protein>
    <recommendedName>
        <fullName evidence="1">Periplasmic nitrate reductase</fullName>
        <ecNumber evidence="1">1.9.6.1</ecNumber>
    </recommendedName>
</protein>
<gene>
    <name evidence="1" type="primary">napA</name>
    <name type="ordered locus">YPTB2760</name>
</gene>
<reference key="1">
    <citation type="journal article" date="2004" name="Proc. Natl. Acad. Sci. U.S.A.">
        <title>Insights into the evolution of Yersinia pestis through whole-genome comparison with Yersinia pseudotuberculosis.</title>
        <authorList>
            <person name="Chain P.S.G."/>
            <person name="Carniel E."/>
            <person name="Larimer F.W."/>
            <person name="Lamerdin J."/>
            <person name="Stoutland P.O."/>
            <person name="Regala W.M."/>
            <person name="Georgescu A.M."/>
            <person name="Vergez L.M."/>
            <person name="Land M.L."/>
            <person name="Motin V.L."/>
            <person name="Brubaker R.R."/>
            <person name="Fowler J."/>
            <person name="Hinnebusch J."/>
            <person name="Marceau M."/>
            <person name="Medigue C."/>
            <person name="Simonet M."/>
            <person name="Chenal-Francisque V."/>
            <person name="Souza B."/>
            <person name="Dacheux D."/>
            <person name="Elliott J.M."/>
            <person name="Derbise A."/>
            <person name="Hauser L.J."/>
            <person name="Garcia E."/>
        </authorList>
    </citation>
    <scope>NUCLEOTIDE SEQUENCE [LARGE SCALE GENOMIC DNA]</scope>
    <source>
        <strain>IP32953</strain>
    </source>
</reference>
<accession>Q668I0</accession>
<proteinExistence type="inferred from homology"/>
<name>NAPA_YERPS</name>
<comment type="function">
    <text evidence="1">Catalytic subunit of the periplasmic nitrate reductase complex NapAB. Receives electrons from NapB and catalyzes the reduction of nitrate to nitrite.</text>
</comment>
<comment type="catalytic activity">
    <reaction evidence="1">
        <text>2 Fe(II)-[cytochrome] + nitrate + 2 H(+) = 2 Fe(III)-[cytochrome] + nitrite + H2O</text>
        <dbReference type="Rhea" id="RHEA:12909"/>
        <dbReference type="Rhea" id="RHEA-COMP:11777"/>
        <dbReference type="Rhea" id="RHEA-COMP:11778"/>
        <dbReference type="ChEBI" id="CHEBI:15377"/>
        <dbReference type="ChEBI" id="CHEBI:15378"/>
        <dbReference type="ChEBI" id="CHEBI:16301"/>
        <dbReference type="ChEBI" id="CHEBI:17632"/>
        <dbReference type="ChEBI" id="CHEBI:29033"/>
        <dbReference type="ChEBI" id="CHEBI:29034"/>
        <dbReference type="EC" id="1.9.6.1"/>
    </reaction>
</comment>
<comment type="cofactor">
    <cofactor evidence="1">
        <name>[4Fe-4S] cluster</name>
        <dbReference type="ChEBI" id="CHEBI:49883"/>
    </cofactor>
    <text evidence="1">Binds 1 [4Fe-4S] cluster.</text>
</comment>
<comment type="cofactor">
    <cofactor evidence="1">
        <name>Mo-bis(molybdopterin guanine dinucleotide)</name>
        <dbReference type="ChEBI" id="CHEBI:60539"/>
    </cofactor>
    <text evidence="1">Binds 1 molybdenum-bis(molybdopterin guanine dinucleotide) (Mo-bis-MGD) cofactor per subunit.</text>
</comment>
<comment type="subunit">
    <text evidence="1">Component of the periplasmic nitrate reductase NapAB complex composed of NapA and NapB.</text>
</comment>
<comment type="subcellular location">
    <subcellularLocation>
        <location evidence="1">Periplasm</location>
    </subcellularLocation>
</comment>
<comment type="PTM">
    <text evidence="1">Predicted to be exported by the Tat system. The position of the signal peptide cleavage has not been experimentally proven.</text>
</comment>
<comment type="similarity">
    <text evidence="1">Belongs to the prokaryotic molybdopterin-containing oxidoreductase family. NasA/NapA/NarB subfamily.</text>
</comment>
<evidence type="ECO:0000255" key="1">
    <source>
        <dbReference type="HAMAP-Rule" id="MF_01630"/>
    </source>
</evidence>
<organism>
    <name type="scientific">Yersinia pseudotuberculosis serotype I (strain IP32953)</name>
    <dbReference type="NCBI Taxonomy" id="273123"/>
    <lineage>
        <taxon>Bacteria</taxon>
        <taxon>Pseudomonadati</taxon>
        <taxon>Pseudomonadota</taxon>
        <taxon>Gammaproteobacteria</taxon>
        <taxon>Enterobacterales</taxon>
        <taxon>Yersiniaceae</taxon>
        <taxon>Yersinia</taxon>
    </lineage>
</organism>
<dbReference type="EC" id="1.9.6.1" evidence="1"/>
<dbReference type="EMBL" id="BX936398">
    <property type="protein sequence ID" value="CAH21998.1"/>
    <property type="molecule type" value="Genomic_DNA"/>
</dbReference>
<dbReference type="RefSeq" id="WP_011171900.1">
    <property type="nucleotide sequence ID" value="NZ_CP009712.1"/>
</dbReference>
<dbReference type="SMR" id="Q668I0"/>
<dbReference type="GeneID" id="49785228"/>
<dbReference type="KEGG" id="ypo:BZ17_3870"/>
<dbReference type="KEGG" id="yps:YPTB2760"/>
<dbReference type="PATRIC" id="fig|273123.14.peg.4063"/>
<dbReference type="Proteomes" id="UP000001011">
    <property type="component" value="Chromosome"/>
</dbReference>
<dbReference type="GO" id="GO:0016020">
    <property type="term" value="C:membrane"/>
    <property type="evidence" value="ECO:0007669"/>
    <property type="project" value="TreeGrafter"/>
</dbReference>
<dbReference type="GO" id="GO:0009325">
    <property type="term" value="C:nitrate reductase complex"/>
    <property type="evidence" value="ECO:0007669"/>
    <property type="project" value="TreeGrafter"/>
</dbReference>
<dbReference type="GO" id="GO:0042597">
    <property type="term" value="C:periplasmic space"/>
    <property type="evidence" value="ECO:0007669"/>
    <property type="project" value="UniProtKB-SubCell"/>
</dbReference>
<dbReference type="GO" id="GO:0051539">
    <property type="term" value="F:4 iron, 4 sulfur cluster binding"/>
    <property type="evidence" value="ECO:0007669"/>
    <property type="project" value="UniProtKB-KW"/>
</dbReference>
<dbReference type="GO" id="GO:0009055">
    <property type="term" value="F:electron transfer activity"/>
    <property type="evidence" value="ECO:0007669"/>
    <property type="project" value="UniProtKB-UniRule"/>
</dbReference>
<dbReference type="GO" id="GO:0005506">
    <property type="term" value="F:iron ion binding"/>
    <property type="evidence" value="ECO:0007669"/>
    <property type="project" value="UniProtKB-UniRule"/>
</dbReference>
<dbReference type="GO" id="GO:0030151">
    <property type="term" value="F:molybdenum ion binding"/>
    <property type="evidence" value="ECO:0007669"/>
    <property type="project" value="InterPro"/>
</dbReference>
<dbReference type="GO" id="GO:0043546">
    <property type="term" value="F:molybdopterin cofactor binding"/>
    <property type="evidence" value="ECO:0007669"/>
    <property type="project" value="InterPro"/>
</dbReference>
<dbReference type="GO" id="GO:0050140">
    <property type="term" value="F:nitrate reductase (cytochrome) activity"/>
    <property type="evidence" value="ECO:0007669"/>
    <property type="project" value="UniProtKB-EC"/>
</dbReference>
<dbReference type="GO" id="GO:0045333">
    <property type="term" value="P:cellular respiration"/>
    <property type="evidence" value="ECO:0007669"/>
    <property type="project" value="UniProtKB-ARBA"/>
</dbReference>
<dbReference type="GO" id="GO:0006777">
    <property type="term" value="P:Mo-molybdopterin cofactor biosynthetic process"/>
    <property type="evidence" value="ECO:0007669"/>
    <property type="project" value="UniProtKB-UniRule"/>
</dbReference>
<dbReference type="GO" id="GO:0042128">
    <property type="term" value="P:nitrate assimilation"/>
    <property type="evidence" value="ECO:0007669"/>
    <property type="project" value="UniProtKB-UniRule"/>
</dbReference>
<dbReference type="CDD" id="cd02791">
    <property type="entry name" value="MopB_CT_Nitrate-R-NapA-like"/>
    <property type="match status" value="1"/>
</dbReference>
<dbReference type="CDD" id="cd02754">
    <property type="entry name" value="MopB_Nitrate-R-NapA-like"/>
    <property type="match status" value="1"/>
</dbReference>
<dbReference type="FunFam" id="2.40.40.20:FF:000005">
    <property type="entry name" value="Periplasmic nitrate reductase"/>
    <property type="match status" value="1"/>
</dbReference>
<dbReference type="Gene3D" id="2.40.40.20">
    <property type="match status" value="1"/>
</dbReference>
<dbReference type="Gene3D" id="3.30.200.210">
    <property type="match status" value="1"/>
</dbReference>
<dbReference type="Gene3D" id="3.40.50.740">
    <property type="match status" value="1"/>
</dbReference>
<dbReference type="Gene3D" id="3.40.228.10">
    <property type="entry name" value="Dimethylsulfoxide Reductase, domain 2"/>
    <property type="match status" value="1"/>
</dbReference>
<dbReference type="HAMAP" id="MF_01630">
    <property type="entry name" value="Nitrate_reduct_NapA"/>
    <property type="match status" value="1"/>
</dbReference>
<dbReference type="InterPro" id="IPR009010">
    <property type="entry name" value="Asp_de-COase-like_dom_sf"/>
</dbReference>
<dbReference type="InterPro" id="IPR041957">
    <property type="entry name" value="CT_Nitrate-R-NapA-like"/>
</dbReference>
<dbReference type="InterPro" id="IPR006657">
    <property type="entry name" value="MoPterin_dinucl-bd_dom"/>
</dbReference>
<dbReference type="InterPro" id="IPR006656">
    <property type="entry name" value="Mopterin_OxRdtase"/>
</dbReference>
<dbReference type="InterPro" id="IPR006963">
    <property type="entry name" value="Mopterin_OxRdtase_4Fe-4S_dom"/>
</dbReference>
<dbReference type="InterPro" id="IPR027467">
    <property type="entry name" value="MopterinOxRdtase_cofactor_BS"/>
</dbReference>
<dbReference type="InterPro" id="IPR010051">
    <property type="entry name" value="Periplasm_NO3_reductase_lsu"/>
</dbReference>
<dbReference type="InterPro" id="IPR050123">
    <property type="entry name" value="Prok_molybdopt-oxidoreductase"/>
</dbReference>
<dbReference type="InterPro" id="IPR006311">
    <property type="entry name" value="TAT_signal"/>
</dbReference>
<dbReference type="InterPro" id="IPR019546">
    <property type="entry name" value="TAT_signal_bac_arc"/>
</dbReference>
<dbReference type="NCBIfam" id="TIGR01706">
    <property type="entry name" value="NAPA"/>
    <property type="match status" value="1"/>
</dbReference>
<dbReference type="NCBIfam" id="NF010055">
    <property type="entry name" value="PRK13532.1"/>
    <property type="match status" value="1"/>
</dbReference>
<dbReference type="NCBIfam" id="TIGR01409">
    <property type="entry name" value="TAT_signal_seq"/>
    <property type="match status" value="1"/>
</dbReference>
<dbReference type="PANTHER" id="PTHR43105:SF11">
    <property type="entry name" value="PERIPLASMIC NITRATE REDUCTASE"/>
    <property type="match status" value="1"/>
</dbReference>
<dbReference type="PANTHER" id="PTHR43105">
    <property type="entry name" value="RESPIRATORY NITRATE REDUCTASE"/>
    <property type="match status" value="1"/>
</dbReference>
<dbReference type="Pfam" id="PF04879">
    <property type="entry name" value="Molybdop_Fe4S4"/>
    <property type="match status" value="1"/>
</dbReference>
<dbReference type="Pfam" id="PF00384">
    <property type="entry name" value="Molybdopterin"/>
    <property type="match status" value="1"/>
</dbReference>
<dbReference type="Pfam" id="PF01568">
    <property type="entry name" value="Molydop_binding"/>
    <property type="match status" value="1"/>
</dbReference>
<dbReference type="Pfam" id="PF10518">
    <property type="entry name" value="TAT_signal"/>
    <property type="match status" value="1"/>
</dbReference>
<dbReference type="SMART" id="SM00926">
    <property type="entry name" value="Molybdop_Fe4S4"/>
    <property type="match status" value="1"/>
</dbReference>
<dbReference type="SUPFAM" id="SSF50692">
    <property type="entry name" value="ADC-like"/>
    <property type="match status" value="1"/>
</dbReference>
<dbReference type="SUPFAM" id="SSF53706">
    <property type="entry name" value="Formate dehydrogenase/DMSO reductase, domains 1-3"/>
    <property type="match status" value="1"/>
</dbReference>
<dbReference type="PROSITE" id="PS51669">
    <property type="entry name" value="4FE4S_MOW_BIS_MGD"/>
    <property type="match status" value="1"/>
</dbReference>
<dbReference type="PROSITE" id="PS00551">
    <property type="entry name" value="MOLYBDOPTERIN_PROK_1"/>
    <property type="match status" value="1"/>
</dbReference>
<dbReference type="PROSITE" id="PS51318">
    <property type="entry name" value="TAT"/>
    <property type="match status" value="1"/>
</dbReference>
<feature type="signal peptide" description="Tat-type signal" evidence="1">
    <location>
        <begin position="1"/>
        <end position="31"/>
    </location>
</feature>
<feature type="chain" id="PRO_0000046016" description="Periplasmic nitrate reductase" evidence="1">
    <location>
        <begin position="32"/>
        <end position="830"/>
    </location>
</feature>
<feature type="domain" description="4Fe-4S Mo/W bis-MGD-type" evidence="1">
    <location>
        <begin position="39"/>
        <end position="95"/>
    </location>
</feature>
<feature type="binding site" evidence="1">
    <location>
        <position position="46"/>
    </location>
    <ligand>
        <name>[4Fe-4S] cluster</name>
        <dbReference type="ChEBI" id="CHEBI:49883"/>
    </ligand>
</feature>
<feature type="binding site" evidence="1">
    <location>
        <position position="49"/>
    </location>
    <ligand>
        <name>[4Fe-4S] cluster</name>
        <dbReference type="ChEBI" id="CHEBI:49883"/>
    </ligand>
</feature>
<feature type="binding site" evidence="1">
    <location>
        <position position="53"/>
    </location>
    <ligand>
        <name>[4Fe-4S] cluster</name>
        <dbReference type="ChEBI" id="CHEBI:49883"/>
    </ligand>
</feature>
<feature type="binding site" evidence="1">
    <location>
        <position position="81"/>
    </location>
    <ligand>
        <name>[4Fe-4S] cluster</name>
        <dbReference type="ChEBI" id="CHEBI:49883"/>
    </ligand>
</feature>
<feature type="binding site" evidence="1">
    <location>
        <position position="83"/>
    </location>
    <ligand>
        <name>Mo-bis(molybdopterin guanine dinucleotide)</name>
        <dbReference type="ChEBI" id="CHEBI:60539"/>
    </ligand>
</feature>
<feature type="binding site" evidence="1">
    <location>
        <position position="150"/>
    </location>
    <ligand>
        <name>Mo-bis(molybdopterin guanine dinucleotide)</name>
        <dbReference type="ChEBI" id="CHEBI:60539"/>
    </ligand>
</feature>
<feature type="binding site" evidence="1">
    <location>
        <position position="175"/>
    </location>
    <ligand>
        <name>Mo-bis(molybdopterin guanine dinucleotide)</name>
        <dbReference type="ChEBI" id="CHEBI:60539"/>
    </ligand>
</feature>
<feature type="binding site" evidence="1">
    <location>
        <position position="179"/>
    </location>
    <ligand>
        <name>Mo-bis(molybdopterin guanine dinucleotide)</name>
        <dbReference type="ChEBI" id="CHEBI:60539"/>
    </ligand>
</feature>
<feature type="binding site" evidence="1">
    <location>
        <begin position="212"/>
        <end position="219"/>
    </location>
    <ligand>
        <name>Mo-bis(molybdopterin guanine dinucleotide)</name>
        <dbReference type="ChEBI" id="CHEBI:60539"/>
    </ligand>
</feature>
<feature type="binding site" evidence="1">
    <location>
        <begin position="243"/>
        <end position="247"/>
    </location>
    <ligand>
        <name>Mo-bis(molybdopterin guanine dinucleotide)</name>
        <dbReference type="ChEBI" id="CHEBI:60539"/>
    </ligand>
</feature>
<feature type="binding site" evidence="1">
    <location>
        <begin position="262"/>
        <end position="264"/>
    </location>
    <ligand>
        <name>Mo-bis(molybdopterin guanine dinucleotide)</name>
        <dbReference type="ChEBI" id="CHEBI:60539"/>
    </ligand>
</feature>
<feature type="binding site" evidence="1">
    <location>
        <position position="372"/>
    </location>
    <ligand>
        <name>Mo-bis(molybdopterin guanine dinucleotide)</name>
        <dbReference type="ChEBI" id="CHEBI:60539"/>
    </ligand>
</feature>
<feature type="binding site" evidence="1">
    <location>
        <position position="376"/>
    </location>
    <ligand>
        <name>Mo-bis(molybdopterin guanine dinucleotide)</name>
        <dbReference type="ChEBI" id="CHEBI:60539"/>
    </ligand>
</feature>
<feature type="binding site" evidence="1">
    <location>
        <position position="482"/>
    </location>
    <ligand>
        <name>Mo-bis(molybdopterin guanine dinucleotide)</name>
        <dbReference type="ChEBI" id="CHEBI:60539"/>
    </ligand>
</feature>
<feature type="binding site" evidence="1">
    <location>
        <begin position="508"/>
        <end position="509"/>
    </location>
    <ligand>
        <name>Mo-bis(molybdopterin guanine dinucleotide)</name>
        <dbReference type="ChEBI" id="CHEBI:60539"/>
    </ligand>
</feature>
<feature type="binding site" evidence="1">
    <location>
        <position position="531"/>
    </location>
    <ligand>
        <name>Mo-bis(molybdopterin guanine dinucleotide)</name>
        <dbReference type="ChEBI" id="CHEBI:60539"/>
    </ligand>
</feature>
<feature type="binding site" evidence="1">
    <location>
        <position position="558"/>
    </location>
    <ligand>
        <name>Mo-bis(molybdopterin guanine dinucleotide)</name>
        <dbReference type="ChEBI" id="CHEBI:60539"/>
    </ligand>
</feature>
<feature type="binding site" evidence="1">
    <location>
        <begin position="718"/>
        <end position="727"/>
    </location>
    <ligand>
        <name>Mo-bis(molybdopterin guanine dinucleotide)</name>
        <dbReference type="ChEBI" id="CHEBI:60539"/>
    </ligand>
</feature>
<feature type="binding site" evidence="1">
    <location>
        <position position="794"/>
    </location>
    <ligand>
        <name>substrate</name>
    </ligand>
</feature>
<feature type="binding site" evidence="1">
    <location>
        <position position="802"/>
    </location>
    <ligand>
        <name>Mo-bis(molybdopterin guanine dinucleotide)</name>
        <dbReference type="ChEBI" id="CHEBI:60539"/>
    </ligand>
</feature>
<feature type="binding site" evidence="1">
    <location>
        <position position="819"/>
    </location>
    <ligand>
        <name>Mo-bis(molybdopterin guanine dinucleotide)</name>
        <dbReference type="ChEBI" id="CHEBI:60539"/>
    </ligand>
</feature>
<sequence>MKLSRRDFMKANAAVAAAAAAGMTIPTVAKAVGETTNAIKWDKAPCRFCGTGCGVLVGTQNGRIVASQGDPDSPVNRGLNCIKGYFLPKIMYGKDRLTQPLLRMKDGQYDKEGDFTPISWEKAFDIMELKFKNALKEKGPTAVGMFGSGQWTVWEGYAALKLLKGGFRSNNLDPNARHCMASSVVGFMRTFGMDEPMGCYDDIEEADAFVLWGSNMAEMHPVLWSRMTSRRLTNAHVRIAVLSTYEHRSFELADNPIVFTPQTDLVIMNYIANYIIQNNAVDKDFLAQHVNFRRGATDIGYGLRPTHPLEKAAKNPGSDASEPMSFEDFKTFVAEYTLEKTAKMSGVPEDQLESLAQLYADPKVKLVSYWTMGFNQHTRGVWANNMCYNLHLLTGKISTPGSGPFSLTGQPSACGTAREVGTFSHRLPADMVVTNEKHRQIAETTWQLPAGTIPEKVGLHAVAQDRALKDGTLNAYWVMCNNNMQAGPNINEERMPGWRDPRNFIVVSDPYPTISALSADLILPTSMWVEKEGAYGNAERRTQFWRQQVPSPGEAKSDLWQIVEFAKRFNVEEVWPAELVNQKPEYRGKNLYEVLFANDVVSKYPLSEIPDDQLNDEARDFGFYIQKGLFEEYASFGRGHAHDLAPFDVYHQVRGLRWPVVDGKETLWRYREGFDPFVPKGEEVRFYGKPDGKAVIFALPYEPAAESPDQEYDLWLSTGRVLEHWHTGSMTRRVPELHRAFPEAVLFIHPLDAKARGLHRGDKVKVISRRGEVISLVETRGRNRPPRGLVYMPFFDAAQLVNNLTLDATDPLSKETDFKKCAVKLERVVA</sequence>
<keyword id="KW-0004">4Fe-4S</keyword>
<keyword id="KW-0249">Electron transport</keyword>
<keyword id="KW-0408">Iron</keyword>
<keyword id="KW-0411">Iron-sulfur</keyword>
<keyword id="KW-0479">Metal-binding</keyword>
<keyword id="KW-0500">Molybdenum</keyword>
<keyword id="KW-0534">Nitrate assimilation</keyword>
<keyword id="KW-0560">Oxidoreductase</keyword>
<keyword id="KW-0574">Periplasm</keyword>
<keyword id="KW-0732">Signal</keyword>
<keyword id="KW-0813">Transport</keyword>